<organism>
    <name type="scientific">Gallus gallus</name>
    <name type="common">Chicken</name>
    <dbReference type="NCBI Taxonomy" id="9031"/>
    <lineage>
        <taxon>Eukaryota</taxon>
        <taxon>Metazoa</taxon>
        <taxon>Chordata</taxon>
        <taxon>Craniata</taxon>
        <taxon>Vertebrata</taxon>
        <taxon>Euteleostomi</taxon>
        <taxon>Archelosauria</taxon>
        <taxon>Archosauria</taxon>
        <taxon>Dinosauria</taxon>
        <taxon>Saurischia</taxon>
        <taxon>Theropoda</taxon>
        <taxon>Coelurosauria</taxon>
        <taxon>Aves</taxon>
        <taxon>Neognathae</taxon>
        <taxon>Galloanserae</taxon>
        <taxon>Galliformes</taxon>
        <taxon>Phasianidae</taxon>
        <taxon>Phasianinae</taxon>
        <taxon>Gallus</taxon>
    </lineage>
</organism>
<name>ERG_CHICK</name>
<accession>Q90837</accession>
<gene>
    <name type="primary">ERG</name>
</gene>
<feature type="chain" id="PRO_0000204105" description="Transcriptional regulator Erg">
    <location>
        <begin position="1"/>
        <end position="478"/>
    </location>
</feature>
<feature type="domain" description="PNT" evidence="2">
    <location>
        <begin position="113"/>
        <end position="199"/>
    </location>
</feature>
<feature type="DNA-binding region" description="ETS" evidence="1">
    <location>
        <begin position="310"/>
        <end position="390"/>
    </location>
</feature>
<feature type="region of interest" description="Disordered" evidence="3">
    <location>
        <begin position="34"/>
        <end position="56"/>
    </location>
</feature>
<feature type="region of interest" description="Disordered" evidence="3">
    <location>
        <begin position="73"/>
        <end position="93"/>
    </location>
</feature>
<feature type="region of interest" description="Disordered" evidence="3">
    <location>
        <begin position="242"/>
        <end position="303"/>
    </location>
</feature>
<feature type="compositionally biased region" description="Polar residues" evidence="3">
    <location>
        <begin position="34"/>
        <end position="47"/>
    </location>
</feature>
<feature type="compositionally biased region" description="Polar residues" evidence="3">
    <location>
        <begin position="259"/>
        <end position="280"/>
    </location>
</feature>
<dbReference type="EMBL" id="X77159">
    <property type="protein sequence ID" value="CAA54404.1"/>
    <property type="molecule type" value="mRNA"/>
</dbReference>
<dbReference type="PIR" id="S60754">
    <property type="entry name" value="S60754"/>
</dbReference>
<dbReference type="RefSeq" id="NP_989611.1">
    <property type="nucleotide sequence ID" value="NM_204280.2"/>
</dbReference>
<dbReference type="BMRB" id="Q90837"/>
<dbReference type="SMR" id="Q90837"/>
<dbReference type="FunCoup" id="Q90837">
    <property type="interactions" value="32"/>
</dbReference>
<dbReference type="STRING" id="9031.ENSGALP00000048441"/>
<dbReference type="PaxDb" id="9031-ENSGALP00000029713"/>
<dbReference type="Ensembl" id="ENSGALT00010032116.1">
    <property type="protein sequence ID" value="ENSGALP00010018906.1"/>
    <property type="gene ID" value="ENSGALG00010013330.1"/>
</dbReference>
<dbReference type="GeneID" id="374146"/>
<dbReference type="KEGG" id="gga:374146"/>
<dbReference type="CTD" id="2078"/>
<dbReference type="VEuPathDB" id="HostDB:geneid_374146"/>
<dbReference type="eggNOG" id="KOG3806">
    <property type="taxonomic scope" value="Eukaryota"/>
</dbReference>
<dbReference type="GeneTree" id="ENSGT00940000160662"/>
<dbReference type="HOGENOM" id="CLU_045216_0_1_1"/>
<dbReference type="InParanoid" id="Q90837"/>
<dbReference type="OrthoDB" id="10067219at2759"/>
<dbReference type="PhylomeDB" id="Q90837"/>
<dbReference type="TreeFam" id="TF350537"/>
<dbReference type="PRO" id="PR:Q90837"/>
<dbReference type="Proteomes" id="UP000000539">
    <property type="component" value="Chromosome 1"/>
</dbReference>
<dbReference type="Bgee" id="ENSGALG00000016058">
    <property type="expression patterns" value="Expressed in lung and 12 other cell types or tissues"/>
</dbReference>
<dbReference type="GO" id="GO:0005634">
    <property type="term" value="C:nucleus"/>
    <property type="evidence" value="ECO:0000318"/>
    <property type="project" value="GO_Central"/>
</dbReference>
<dbReference type="GO" id="GO:0000981">
    <property type="term" value="F:DNA-binding transcription factor activity, RNA polymerase II-specific"/>
    <property type="evidence" value="ECO:0000318"/>
    <property type="project" value="GO_Central"/>
</dbReference>
<dbReference type="GO" id="GO:0043565">
    <property type="term" value="F:sequence-specific DNA binding"/>
    <property type="evidence" value="ECO:0007669"/>
    <property type="project" value="InterPro"/>
</dbReference>
<dbReference type="GO" id="GO:0030154">
    <property type="term" value="P:cell differentiation"/>
    <property type="evidence" value="ECO:0000318"/>
    <property type="project" value="GO_Central"/>
</dbReference>
<dbReference type="GO" id="GO:0006357">
    <property type="term" value="P:regulation of transcription by RNA polymerase II"/>
    <property type="evidence" value="ECO:0000318"/>
    <property type="project" value="GO_Central"/>
</dbReference>
<dbReference type="CDD" id="cd08540">
    <property type="entry name" value="SAM_PNT-ERG"/>
    <property type="match status" value="1"/>
</dbReference>
<dbReference type="FunFam" id="1.10.150.50:FF:000010">
    <property type="entry name" value="Fli-1 proto-oncogene, ETS transcription factor"/>
    <property type="match status" value="1"/>
</dbReference>
<dbReference type="FunFam" id="1.10.10.10:FF:000039">
    <property type="entry name" value="Friend leukemia integration 1 transcription factor"/>
    <property type="match status" value="1"/>
</dbReference>
<dbReference type="Gene3D" id="1.10.150.50">
    <property type="entry name" value="Transcription Factor, Ets-1"/>
    <property type="match status" value="1"/>
</dbReference>
<dbReference type="Gene3D" id="1.10.10.10">
    <property type="entry name" value="Winged helix-like DNA-binding domain superfamily/Winged helix DNA-binding domain"/>
    <property type="match status" value="1"/>
</dbReference>
<dbReference type="InterPro" id="IPR000418">
    <property type="entry name" value="Ets_dom"/>
</dbReference>
<dbReference type="InterPro" id="IPR046328">
    <property type="entry name" value="ETS_fam"/>
</dbReference>
<dbReference type="InterPro" id="IPR003118">
    <property type="entry name" value="Pointed_dom"/>
</dbReference>
<dbReference type="InterPro" id="IPR001660">
    <property type="entry name" value="SAM"/>
</dbReference>
<dbReference type="InterPro" id="IPR013761">
    <property type="entry name" value="SAM/pointed_sf"/>
</dbReference>
<dbReference type="InterPro" id="IPR036388">
    <property type="entry name" value="WH-like_DNA-bd_sf"/>
</dbReference>
<dbReference type="InterPro" id="IPR036390">
    <property type="entry name" value="WH_DNA-bd_sf"/>
</dbReference>
<dbReference type="PANTHER" id="PTHR11849">
    <property type="entry name" value="ETS"/>
    <property type="match status" value="1"/>
</dbReference>
<dbReference type="PANTHER" id="PTHR11849:SF216">
    <property type="entry name" value="TRANSCRIPTIONAL REGULATOR ERG"/>
    <property type="match status" value="1"/>
</dbReference>
<dbReference type="Pfam" id="PF00178">
    <property type="entry name" value="Ets"/>
    <property type="match status" value="1"/>
</dbReference>
<dbReference type="Pfam" id="PF02198">
    <property type="entry name" value="SAM_PNT"/>
    <property type="match status" value="1"/>
</dbReference>
<dbReference type="PRINTS" id="PR00454">
    <property type="entry name" value="ETSDOMAIN"/>
</dbReference>
<dbReference type="SMART" id="SM00413">
    <property type="entry name" value="ETS"/>
    <property type="match status" value="1"/>
</dbReference>
<dbReference type="SMART" id="SM00251">
    <property type="entry name" value="SAM_PNT"/>
    <property type="match status" value="1"/>
</dbReference>
<dbReference type="SUPFAM" id="SSF47769">
    <property type="entry name" value="SAM/Pointed domain"/>
    <property type="match status" value="1"/>
</dbReference>
<dbReference type="SUPFAM" id="SSF46785">
    <property type="entry name" value="Winged helix' DNA-binding domain"/>
    <property type="match status" value="1"/>
</dbReference>
<dbReference type="PROSITE" id="PS00345">
    <property type="entry name" value="ETS_DOMAIN_1"/>
    <property type="match status" value="1"/>
</dbReference>
<dbReference type="PROSITE" id="PS00346">
    <property type="entry name" value="ETS_DOMAIN_2"/>
    <property type="match status" value="1"/>
</dbReference>
<dbReference type="PROSITE" id="PS50061">
    <property type="entry name" value="ETS_DOMAIN_3"/>
    <property type="match status" value="1"/>
</dbReference>
<dbReference type="PROSITE" id="PS51433">
    <property type="entry name" value="PNT"/>
    <property type="match status" value="1"/>
</dbReference>
<reference key="1">
    <citation type="journal article" date="1995" name="Mech. Dev.">
        <title>Mesodermal expression of the chicken erg gene associated with precartilaginous condensation and cartilage differentiation.</title>
        <authorList>
            <person name="Dhordain P."/>
            <person name="Dewitte F."/>
            <person name="Desbiens X."/>
            <person name="Stehelin D."/>
            <person name="Duterque-Coquillaud M."/>
        </authorList>
    </citation>
    <scope>NUCLEOTIDE SEQUENCE [MRNA]</scope>
    <source>
        <tissue>Spleen</tissue>
    </source>
</reference>
<keyword id="KW-0010">Activator</keyword>
<keyword id="KW-0238">DNA-binding</keyword>
<keyword id="KW-0539">Nucleus</keyword>
<keyword id="KW-1185">Reference proteome</keyword>
<keyword id="KW-0804">Transcription</keyword>
<keyword id="KW-0805">Transcription regulation</keyword>
<evidence type="ECO:0000255" key="1">
    <source>
        <dbReference type="PROSITE-ProRule" id="PRU00237"/>
    </source>
</evidence>
<evidence type="ECO:0000255" key="2">
    <source>
        <dbReference type="PROSITE-ProRule" id="PRU00762"/>
    </source>
</evidence>
<evidence type="ECO:0000256" key="3">
    <source>
        <dbReference type="SAM" id="MobiDB-lite"/>
    </source>
</evidence>
<evidence type="ECO:0000305" key="4"/>
<sequence length="478" mass="53913">MASTIKEALSVVSEDQSLFECAYGSPHLAKTEMTASSSSEYGQTSKMSPRVPQQDWLSQPPARVTIKMECNPNQVNGSRNSPDDCSVAKGGKMVSSSDNVGMNYGSYMEEKHIPPPNMTTNERRVIVPADPTLWSTDHVRQWLEWAVKEYGLPDVDILLFQNIDGKELCKMTKDDFQRLTPSYNADILLSHLHYLRETPLPHLTSDDVDKALQNSPRLMHARNTGGATFIFPNTSVYPEATQRITTRPDLPYEQARRSAWTSHSHPTQSKATQPSSSTVPKTEDQRPQLDPYQILGPTSSRLANPGSGQIQLWQFLLELLSDSSNSNCITWEGTNGEFKMTDPDEVARRWGERKSKPNMNYDKLSRALRYYYDKNIMTKVHGKRYAYKFDFHGIAQALQPHPPESSMYKYPSDLPYMSSYHAHPQKMNFVAPHPPALPVTSSSFFAAPNPYWNSPTGGIYPNTRLPAAHMPSHLGTYY</sequence>
<protein>
    <recommendedName>
        <fullName>Transcriptional regulator Erg</fullName>
    </recommendedName>
</protein>
<proteinExistence type="evidence at transcript level"/>
<comment type="function">
    <text>Acts as a transcriptional activator.</text>
</comment>
<comment type="subcellular location">
    <subcellularLocation>
        <location>Nucleus</location>
    </subcellularLocation>
</comment>
<comment type="tissue specificity">
    <text>Expressed in mesoderm- and, to a lesser extent, in ectoderm-derived tissues.</text>
</comment>
<comment type="similarity">
    <text evidence="4">Belongs to the ETS family.</text>
</comment>